<name>SPRTL_ENTFA</name>
<reference key="1">
    <citation type="journal article" date="2003" name="Science">
        <title>Role of mobile DNA in the evolution of vancomycin-resistant Enterococcus faecalis.</title>
        <authorList>
            <person name="Paulsen I.T."/>
            <person name="Banerjei L."/>
            <person name="Myers G.S.A."/>
            <person name="Nelson K.E."/>
            <person name="Seshadri R."/>
            <person name="Read T.D."/>
            <person name="Fouts D.E."/>
            <person name="Eisen J.A."/>
            <person name="Gill S.R."/>
            <person name="Heidelberg J.F."/>
            <person name="Tettelin H."/>
            <person name="Dodson R.J."/>
            <person name="Umayam L.A."/>
            <person name="Brinkac L.M."/>
            <person name="Beanan M.J."/>
            <person name="Daugherty S.C."/>
            <person name="DeBoy R.T."/>
            <person name="Durkin S.A."/>
            <person name="Kolonay J.F."/>
            <person name="Madupu R."/>
            <person name="Nelson W.C."/>
            <person name="Vamathevan J.J."/>
            <person name="Tran B."/>
            <person name="Upton J."/>
            <person name="Hansen T."/>
            <person name="Shetty J."/>
            <person name="Khouri H.M."/>
            <person name="Utterback T.R."/>
            <person name="Radune D."/>
            <person name="Ketchum K.A."/>
            <person name="Dougherty B.A."/>
            <person name="Fraser C.M."/>
        </authorList>
    </citation>
    <scope>NUCLEOTIDE SEQUENCE [LARGE SCALE GENOMIC DNA]</scope>
    <source>
        <strain>ATCC 700802 / V583</strain>
    </source>
</reference>
<organism>
    <name type="scientific">Enterococcus faecalis (strain ATCC 700802 / V583)</name>
    <dbReference type="NCBI Taxonomy" id="226185"/>
    <lineage>
        <taxon>Bacteria</taxon>
        <taxon>Bacillati</taxon>
        <taxon>Bacillota</taxon>
        <taxon>Bacilli</taxon>
        <taxon>Lactobacillales</taxon>
        <taxon>Enterococcaceae</taxon>
        <taxon>Enterococcus</taxon>
    </lineage>
</organism>
<gene>
    <name type="ordered locus">EF_1313</name>
</gene>
<dbReference type="EMBL" id="AE016830">
    <property type="protein sequence ID" value="AAO81105.1"/>
    <property type="molecule type" value="Genomic_DNA"/>
</dbReference>
<dbReference type="RefSeq" id="NP_815035.1">
    <property type="nucleotide sequence ID" value="NC_004668.1"/>
</dbReference>
<dbReference type="RefSeq" id="WP_002365561.1">
    <property type="nucleotide sequence ID" value="NZ_KE136528.1"/>
</dbReference>
<dbReference type="STRING" id="226185.EF_1313"/>
<dbReference type="EnsemblBacteria" id="AAO81105">
    <property type="protein sequence ID" value="AAO81105"/>
    <property type="gene ID" value="EF_1313"/>
</dbReference>
<dbReference type="KEGG" id="efa:EF1313"/>
<dbReference type="PATRIC" id="fig|226185.9.peg.1230"/>
<dbReference type="eggNOG" id="COG3091">
    <property type="taxonomic scope" value="Bacteria"/>
</dbReference>
<dbReference type="HOGENOM" id="CLU_123820_0_0_9"/>
<dbReference type="Proteomes" id="UP000001415">
    <property type="component" value="Chromosome"/>
</dbReference>
<dbReference type="GO" id="GO:0005737">
    <property type="term" value="C:cytoplasm"/>
    <property type="evidence" value="ECO:0007669"/>
    <property type="project" value="UniProtKB-SubCell"/>
</dbReference>
<dbReference type="GO" id="GO:0008270">
    <property type="term" value="F:zinc ion binding"/>
    <property type="evidence" value="ECO:0007669"/>
    <property type="project" value="UniProtKB-UniRule"/>
</dbReference>
<dbReference type="GO" id="GO:0006950">
    <property type="term" value="P:response to stress"/>
    <property type="evidence" value="ECO:0007669"/>
    <property type="project" value="UniProtKB-ARBA"/>
</dbReference>
<dbReference type="Gene3D" id="3.30.2010.10">
    <property type="entry name" value="Metalloproteases ('zincins'), catalytic domain"/>
    <property type="match status" value="1"/>
</dbReference>
<dbReference type="HAMAP" id="MF_00745">
    <property type="entry name" value="SprT_like"/>
    <property type="match status" value="1"/>
</dbReference>
<dbReference type="InterPro" id="IPR006640">
    <property type="entry name" value="SprT-like_domain"/>
</dbReference>
<dbReference type="InterPro" id="IPR023524">
    <property type="entry name" value="Uncharacterised_SprT-like"/>
</dbReference>
<dbReference type="NCBIfam" id="NF003339">
    <property type="entry name" value="PRK04351.1"/>
    <property type="match status" value="1"/>
</dbReference>
<dbReference type="Pfam" id="PF10263">
    <property type="entry name" value="SprT-like"/>
    <property type="match status" value="1"/>
</dbReference>
<dbReference type="SMART" id="SM00731">
    <property type="entry name" value="SprT"/>
    <property type="match status" value="1"/>
</dbReference>
<feature type="chain" id="PRO_0000213289" description="Protein SprT-like">
    <location>
        <begin position="1"/>
        <end position="153"/>
    </location>
</feature>
<feature type="domain" description="SprT-like" evidence="1">
    <location>
        <begin position="7"/>
        <end position="145"/>
    </location>
</feature>
<feature type="active site" evidence="1">
    <location>
        <position position="68"/>
    </location>
</feature>
<feature type="binding site" evidence="1">
    <location>
        <position position="67"/>
    </location>
    <ligand>
        <name>Zn(2+)</name>
        <dbReference type="ChEBI" id="CHEBI:29105"/>
    </ligand>
</feature>
<feature type="binding site" evidence="1">
    <location>
        <position position="71"/>
    </location>
    <ligand>
        <name>Zn(2+)</name>
        <dbReference type="ChEBI" id="CHEBI:29105"/>
    </ligand>
</feature>
<keyword id="KW-0963">Cytoplasm</keyword>
<keyword id="KW-0479">Metal-binding</keyword>
<keyword id="KW-1185">Reference proteome</keyword>
<keyword id="KW-0862">Zinc</keyword>
<protein>
    <recommendedName>
        <fullName evidence="1">Protein SprT-like</fullName>
    </recommendedName>
</protein>
<comment type="cofactor">
    <cofactor evidence="1">
        <name>Zn(2+)</name>
        <dbReference type="ChEBI" id="CHEBI:29105"/>
    </cofactor>
    <text evidence="1">Binds 1 zinc ion.</text>
</comment>
<comment type="subcellular location">
    <subcellularLocation>
        <location evidence="1">Cytoplasm</location>
    </subcellularLocation>
</comment>
<comment type="similarity">
    <text evidence="1">Belongs to the SprT family.</text>
</comment>
<proteinExistence type="inferred from homology"/>
<evidence type="ECO:0000255" key="1">
    <source>
        <dbReference type="HAMAP-Rule" id="MF_00745"/>
    </source>
</evidence>
<sequence>MTDQALQTLVEKISIVFFQKPFLHQATFNRRLKTTGGRYHLASHHLDFNPTVFLKYGQEELEKVIKHELCHYHLHLAGKGYQHKDKDFKELLAKTGGARYAPPLVERKKAVFHQYQCQSCGEVILRKRRIDTTRYVCGKCHGRLSWQAKKEQI</sequence>
<accession>Q835R2</accession>